<accession>Q898L3</accession>
<evidence type="ECO:0000250" key="1"/>
<evidence type="ECO:0000305" key="2"/>
<keyword id="KW-0028">Amino-acid biosynthesis</keyword>
<keyword id="KW-0067">ATP-binding</keyword>
<keyword id="KW-0963">Cytoplasm</keyword>
<keyword id="KW-0368">Histidine biosynthesis</keyword>
<keyword id="KW-0378">Hydrolase</keyword>
<keyword id="KW-0547">Nucleotide-binding</keyword>
<keyword id="KW-1185">Reference proteome</keyword>
<name>HIS2_CLOTE</name>
<comment type="catalytic activity">
    <reaction>
        <text>1-(5-phospho-beta-D-ribosyl)-ATP + H2O = 1-(5-phospho-beta-D-ribosyl)-5'-AMP + diphosphate + H(+)</text>
        <dbReference type="Rhea" id="RHEA:22828"/>
        <dbReference type="ChEBI" id="CHEBI:15377"/>
        <dbReference type="ChEBI" id="CHEBI:15378"/>
        <dbReference type="ChEBI" id="CHEBI:33019"/>
        <dbReference type="ChEBI" id="CHEBI:59457"/>
        <dbReference type="ChEBI" id="CHEBI:73183"/>
        <dbReference type="EC" id="3.6.1.31"/>
    </reaction>
</comment>
<comment type="pathway">
    <text>Amino-acid biosynthesis; L-histidine biosynthesis; L-histidine from 5-phospho-alpha-D-ribose 1-diphosphate: step 2/9.</text>
</comment>
<comment type="subcellular location">
    <subcellularLocation>
        <location evidence="1">Cytoplasm</location>
    </subcellularLocation>
</comment>
<comment type="similarity">
    <text evidence="2">Belongs to the PRA-PH family.</text>
</comment>
<organism>
    <name type="scientific">Clostridium tetani (strain Massachusetts / E88)</name>
    <dbReference type="NCBI Taxonomy" id="212717"/>
    <lineage>
        <taxon>Bacteria</taxon>
        <taxon>Bacillati</taxon>
        <taxon>Bacillota</taxon>
        <taxon>Clostridia</taxon>
        <taxon>Eubacteriales</taxon>
        <taxon>Clostridiaceae</taxon>
        <taxon>Clostridium</taxon>
    </lineage>
</organism>
<reference key="1">
    <citation type="journal article" date="2003" name="Proc. Natl. Acad. Sci. U.S.A.">
        <title>The genome sequence of Clostridium tetani, the causative agent of tetanus disease.</title>
        <authorList>
            <person name="Brueggemann H."/>
            <person name="Baeumer S."/>
            <person name="Fricke W.F."/>
            <person name="Wiezer A."/>
            <person name="Liesegang H."/>
            <person name="Decker I."/>
            <person name="Herzberg C."/>
            <person name="Martinez-Arias R."/>
            <person name="Merkl R."/>
            <person name="Henne A."/>
            <person name="Gottschalk G."/>
        </authorList>
    </citation>
    <scope>NUCLEOTIDE SEQUENCE [LARGE SCALE GENOMIC DNA]</scope>
    <source>
        <strain>Massachusetts / E88</strain>
    </source>
</reference>
<dbReference type="EC" id="3.6.1.31"/>
<dbReference type="EMBL" id="AE015927">
    <property type="protein sequence ID" value="AAO35066.1"/>
    <property type="molecule type" value="Genomic_DNA"/>
</dbReference>
<dbReference type="RefSeq" id="WP_011098737.1">
    <property type="nucleotide sequence ID" value="NC_004557.1"/>
</dbReference>
<dbReference type="SMR" id="Q898L3"/>
<dbReference type="STRING" id="212717.CTC_00432"/>
<dbReference type="GeneID" id="24254715"/>
<dbReference type="KEGG" id="ctc:CTC_00432"/>
<dbReference type="HOGENOM" id="CLU_123337_0_0_9"/>
<dbReference type="OrthoDB" id="9795769at2"/>
<dbReference type="UniPathway" id="UPA00031">
    <property type="reaction ID" value="UER00007"/>
</dbReference>
<dbReference type="Proteomes" id="UP000001412">
    <property type="component" value="Chromosome"/>
</dbReference>
<dbReference type="GO" id="GO:0005737">
    <property type="term" value="C:cytoplasm"/>
    <property type="evidence" value="ECO:0007669"/>
    <property type="project" value="UniProtKB-SubCell"/>
</dbReference>
<dbReference type="GO" id="GO:0005524">
    <property type="term" value="F:ATP binding"/>
    <property type="evidence" value="ECO:0007669"/>
    <property type="project" value="UniProtKB-KW"/>
</dbReference>
<dbReference type="GO" id="GO:0004636">
    <property type="term" value="F:phosphoribosyl-ATP diphosphatase activity"/>
    <property type="evidence" value="ECO:0007669"/>
    <property type="project" value="UniProtKB-EC"/>
</dbReference>
<dbReference type="GO" id="GO:0000105">
    <property type="term" value="P:L-histidine biosynthetic process"/>
    <property type="evidence" value="ECO:0007669"/>
    <property type="project" value="UniProtKB-UniPathway"/>
</dbReference>
<dbReference type="CDD" id="cd11534">
    <property type="entry name" value="NTP-PPase_HisIE_like"/>
    <property type="match status" value="1"/>
</dbReference>
<dbReference type="Gene3D" id="1.10.287.1080">
    <property type="entry name" value="MazG-like"/>
    <property type="match status" value="1"/>
</dbReference>
<dbReference type="InterPro" id="IPR008179">
    <property type="entry name" value="HisE"/>
</dbReference>
<dbReference type="InterPro" id="IPR021130">
    <property type="entry name" value="PRib-ATP_PPHydrolase-like"/>
</dbReference>
<dbReference type="NCBIfam" id="TIGR03188">
    <property type="entry name" value="histidine_hisI"/>
    <property type="match status" value="1"/>
</dbReference>
<dbReference type="PANTHER" id="PTHR42945">
    <property type="entry name" value="HISTIDINE BIOSYNTHESIS BIFUNCTIONAL PROTEIN"/>
    <property type="match status" value="1"/>
</dbReference>
<dbReference type="PANTHER" id="PTHR42945:SF9">
    <property type="entry name" value="HISTIDINE BIOSYNTHESIS BIFUNCTIONAL PROTEIN HISIE"/>
    <property type="match status" value="1"/>
</dbReference>
<dbReference type="Pfam" id="PF01503">
    <property type="entry name" value="PRA-PH"/>
    <property type="match status" value="1"/>
</dbReference>
<dbReference type="SUPFAM" id="SSF101386">
    <property type="entry name" value="all-alpha NTP pyrophosphatases"/>
    <property type="match status" value="1"/>
</dbReference>
<feature type="chain" id="PRO_0000136358" description="Phosphoribosyl-ATP pyrophosphatase">
    <location>
        <begin position="1"/>
        <end position="107"/>
    </location>
</feature>
<sequence length="107" mass="12529">MEVNKLIEELVEVIKDRKNDIIFSYLFEEESDKILKKIGEKSSEVIIACKNASKEEQVHEISDLIYNLMVLMMKQNIEIENVIEELGKRRNMTLNKKSTKSVYPSIH</sequence>
<protein>
    <recommendedName>
        <fullName>Phosphoribosyl-ATP pyrophosphatase</fullName>
        <shortName>PRA-PH</shortName>
        <ecNumber>3.6.1.31</ecNumber>
    </recommendedName>
</protein>
<proteinExistence type="inferred from homology"/>
<gene>
    <name type="primary">hisE</name>
    <name type="ordered locus">CTC_00432</name>
</gene>